<accession>Q5PAY1</accession>
<gene>
    <name evidence="1" type="primary">rpsO</name>
    <name type="ordered locus">AM525</name>
</gene>
<protein>
    <recommendedName>
        <fullName evidence="1">Small ribosomal subunit protein uS15</fullName>
    </recommendedName>
    <alternativeName>
        <fullName evidence="2">30S ribosomal protein S15</fullName>
    </alternativeName>
</protein>
<reference key="1">
    <citation type="journal article" date="2005" name="Proc. Natl. Acad. Sci. U.S.A.">
        <title>Complete genome sequencing of Anaplasma marginale reveals that the surface is skewed to two superfamilies of outer membrane proteins.</title>
        <authorList>
            <person name="Brayton K.A."/>
            <person name="Kappmeyer L.S."/>
            <person name="Herndon D.R."/>
            <person name="Dark M.J."/>
            <person name="Tibbals D.L."/>
            <person name="Palmer G.H."/>
            <person name="McGuire T.C."/>
            <person name="Knowles D.P. Jr."/>
        </authorList>
    </citation>
    <scope>NUCLEOTIDE SEQUENCE [LARGE SCALE GENOMIC DNA]</scope>
    <source>
        <strain>St. Maries</strain>
    </source>
</reference>
<comment type="function">
    <text evidence="1">One of the primary rRNA binding proteins, it binds directly to 16S rRNA where it helps nucleate assembly of the platform of the 30S subunit by binding and bridging several RNA helices of the 16S rRNA.</text>
</comment>
<comment type="function">
    <text evidence="1">Forms an intersubunit bridge (bridge B4) with the 23S rRNA of the 50S subunit in the ribosome.</text>
</comment>
<comment type="subunit">
    <text evidence="1">Part of the 30S ribosomal subunit. Forms a bridge to the 50S subunit in the 70S ribosome, contacting the 23S rRNA.</text>
</comment>
<comment type="similarity">
    <text evidence="1">Belongs to the universal ribosomal protein uS15 family.</text>
</comment>
<proteinExistence type="inferred from homology"/>
<organism>
    <name type="scientific">Anaplasma marginale (strain St. Maries)</name>
    <dbReference type="NCBI Taxonomy" id="234826"/>
    <lineage>
        <taxon>Bacteria</taxon>
        <taxon>Pseudomonadati</taxon>
        <taxon>Pseudomonadota</taxon>
        <taxon>Alphaproteobacteria</taxon>
        <taxon>Rickettsiales</taxon>
        <taxon>Anaplasmataceae</taxon>
        <taxon>Anaplasma</taxon>
    </lineage>
</organism>
<keyword id="KW-0687">Ribonucleoprotein</keyword>
<keyword id="KW-0689">Ribosomal protein</keyword>
<keyword id="KW-0694">RNA-binding</keyword>
<keyword id="KW-0699">rRNA-binding</keyword>
<sequence>MSITPAKKSELISEYKVKDGDTGSAYVQCAILSERIRNLTEHLKIHKKDFHCRRGLMVLVCKRRKGLQYVRNKYGNDAYLDLVKRLGIRDVFH</sequence>
<name>RS15_ANAMM</name>
<evidence type="ECO:0000255" key="1">
    <source>
        <dbReference type="HAMAP-Rule" id="MF_01343"/>
    </source>
</evidence>
<evidence type="ECO:0000305" key="2"/>
<feature type="chain" id="PRO_0000115370" description="Small ribosomal subunit protein uS15">
    <location>
        <begin position="1"/>
        <end position="93"/>
    </location>
</feature>
<dbReference type="EMBL" id="CP000030">
    <property type="protein sequence ID" value="AAV86549.1"/>
    <property type="molecule type" value="Genomic_DNA"/>
</dbReference>
<dbReference type="RefSeq" id="WP_010269853.1">
    <property type="nucleotide sequence ID" value="NZ_AFMU01000030.1"/>
</dbReference>
<dbReference type="SMR" id="Q5PAY1"/>
<dbReference type="KEGG" id="ama:AM525"/>
<dbReference type="HOGENOM" id="CLU_148518_0_0_5"/>
<dbReference type="GO" id="GO:0022627">
    <property type="term" value="C:cytosolic small ribosomal subunit"/>
    <property type="evidence" value="ECO:0007669"/>
    <property type="project" value="TreeGrafter"/>
</dbReference>
<dbReference type="GO" id="GO:0019843">
    <property type="term" value="F:rRNA binding"/>
    <property type="evidence" value="ECO:0007669"/>
    <property type="project" value="UniProtKB-UniRule"/>
</dbReference>
<dbReference type="GO" id="GO:0003735">
    <property type="term" value="F:structural constituent of ribosome"/>
    <property type="evidence" value="ECO:0007669"/>
    <property type="project" value="InterPro"/>
</dbReference>
<dbReference type="GO" id="GO:0006412">
    <property type="term" value="P:translation"/>
    <property type="evidence" value="ECO:0007669"/>
    <property type="project" value="UniProtKB-UniRule"/>
</dbReference>
<dbReference type="CDD" id="cd00353">
    <property type="entry name" value="Ribosomal_S15p_S13e"/>
    <property type="match status" value="1"/>
</dbReference>
<dbReference type="FunFam" id="1.10.287.10:FF:000002">
    <property type="entry name" value="30S ribosomal protein S15"/>
    <property type="match status" value="1"/>
</dbReference>
<dbReference type="Gene3D" id="1.10.287.10">
    <property type="entry name" value="S15/NS1, RNA-binding"/>
    <property type="match status" value="1"/>
</dbReference>
<dbReference type="HAMAP" id="MF_01343_B">
    <property type="entry name" value="Ribosomal_uS15_B"/>
    <property type="match status" value="1"/>
</dbReference>
<dbReference type="InterPro" id="IPR000589">
    <property type="entry name" value="Ribosomal_uS15"/>
</dbReference>
<dbReference type="InterPro" id="IPR005290">
    <property type="entry name" value="Ribosomal_uS15_bac-type"/>
</dbReference>
<dbReference type="InterPro" id="IPR009068">
    <property type="entry name" value="uS15_NS1_RNA-bd_sf"/>
</dbReference>
<dbReference type="NCBIfam" id="TIGR00952">
    <property type="entry name" value="S15_bact"/>
    <property type="match status" value="1"/>
</dbReference>
<dbReference type="PANTHER" id="PTHR23321">
    <property type="entry name" value="RIBOSOMAL PROTEIN S15, BACTERIAL AND ORGANELLAR"/>
    <property type="match status" value="1"/>
</dbReference>
<dbReference type="PANTHER" id="PTHR23321:SF26">
    <property type="entry name" value="SMALL RIBOSOMAL SUBUNIT PROTEIN US15M"/>
    <property type="match status" value="1"/>
</dbReference>
<dbReference type="Pfam" id="PF00312">
    <property type="entry name" value="Ribosomal_S15"/>
    <property type="match status" value="1"/>
</dbReference>
<dbReference type="SMART" id="SM01387">
    <property type="entry name" value="Ribosomal_S15"/>
    <property type="match status" value="1"/>
</dbReference>
<dbReference type="SUPFAM" id="SSF47060">
    <property type="entry name" value="S15/NS1 RNA-binding domain"/>
    <property type="match status" value="1"/>
</dbReference>